<organism>
    <name type="scientific">Rhodospirillum rubrum (strain ATCC 11170 / ATH 1.1.1 / DSM 467 / LMG 4362 / NCIMB 8255 / S1)</name>
    <dbReference type="NCBI Taxonomy" id="269796"/>
    <lineage>
        <taxon>Bacteria</taxon>
        <taxon>Pseudomonadati</taxon>
        <taxon>Pseudomonadota</taxon>
        <taxon>Alphaproteobacteria</taxon>
        <taxon>Rhodospirillales</taxon>
        <taxon>Rhodospirillaceae</taxon>
        <taxon>Rhodospirillum</taxon>
    </lineage>
</organism>
<comment type="function">
    <text evidence="1">Catalyzes the ATP-dependent phosphorylation of N-acetyl-L-glutamate.</text>
</comment>
<comment type="catalytic activity">
    <reaction evidence="1">
        <text>N-acetyl-L-glutamate + ATP = N-acetyl-L-glutamyl 5-phosphate + ADP</text>
        <dbReference type="Rhea" id="RHEA:14629"/>
        <dbReference type="ChEBI" id="CHEBI:30616"/>
        <dbReference type="ChEBI" id="CHEBI:44337"/>
        <dbReference type="ChEBI" id="CHEBI:57936"/>
        <dbReference type="ChEBI" id="CHEBI:456216"/>
        <dbReference type="EC" id="2.7.2.8"/>
    </reaction>
</comment>
<comment type="pathway">
    <text evidence="1">Amino-acid biosynthesis; L-arginine biosynthesis; N(2)-acetyl-L-ornithine from L-glutamate: step 2/4.</text>
</comment>
<comment type="subcellular location">
    <subcellularLocation>
        <location evidence="1">Cytoplasm</location>
    </subcellularLocation>
</comment>
<comment type="similarity">
    <text evidence="1">Belongs to the acetylglutamate kinase family. ArgB subfamily.</text>
</comment>
<accession>Q2RP10</accession>
<gene>
    <name evidence="1" type="primary">argB</name>
    <name type="ordered locus">Rru_A3341</name>
</gene>
<dbReference type="EC" id="2.7.2.8" evidence="1"/>
<dbReference type="EMBL" id="CP000230">
    <property type="protein sequence ID" value="ABC24135.1"/>
    <property type="molecule type" value="Genomic_DNA"/>
</dbReference>
<dbReference type="RefSeq" id="WP_011391088.1">
    <property type="nucleotide sequence ID" value="NC_007643.1"/>
</dbReference>
<dbReference type="RefSeq" id="YP_428422.1">
    <property type="nucleotide sequence ID" value="NC_007643.1"/>
</dbReference>
<dbReference type="SMR" id="Q2RP10"/>
<dbReference type="STRING" id="269796.Rru_A3341"/>
<dbReference type="EnsemblBacteria" id="ABC24135">
    <property type="protein sequence ID" value="ABC24135"/>
    <property type="gene ID" value="Rru_A3341"/>
</dbReference>
<dbReference type="KEGG" id="rru:Rru_A3341"/>
<dbReference type="PATRIC" id="fig|269796.9.peg.3455"/>
<dbReference type="eggNOG" id="COG0548">
    <property type="taxonomic scope" value="Bacteria"/>
</dbReference>
<dbReference type="HOGENOM" id="CLU_053680_0_0_5"/>
<dbReference type="PhylomeDB" id="Q2RP10"/>
<dbReference type="UniPathway" id="UPA00068">
    <property type="reaction ID" value="UER00107"/>
</dbReference>
<dbReference type="Proteomes" id="UP000001929">
    <property type="component" value="Chromosome"/>
</dbReference>
<dbReference type="GO" id="GO:0005737">
    <property type="term" value="C:cytoplasm"/>
    <property type="evidence" value="ECO:0007669"/>
    <property type="project" value="UniProtKB-SubCell"/>
</dbReference>
<dbReference type="GO" id="GO:0003991">
    <property type="term" value="F:acetylglutamate kinase activity"/>
    <property type="evidence" value="ECO:0007669"/>
    <property type="project" value="UniProtKB-UniRule"/>
</dbReference>
<dbReference type="GO" id="GO:0005524">
    <property type="term" value="F:ATP binding"/>
    <property type="evidence" value="ECO:0007669"/>
    <property type="project" value="UniProtKB-UniRule"/>
</dbReference>
<dbReference type="GO" id="GO:0042450">
    <property type="term" value="P:arginine biosynthetic process via ornithine"/>
    <property type="evidence" value="ECO:0007669"/>
    <property type="project" value="UniProtKB-UniRule"/>
</dbReference>
<dbReference type="GO" id="GO:0006526">
    <property type="term" value="P:L-arginine biosynthetic process"/>
    <property type="evidence" value="ECO:0007669"/>
    <property type="project" value="UniProtKB-UniPathway"/>
</dbReference>
<dbReference type="CDD" id="cd04250">
    <property type="entry name" value="AAK_NAGK-C"/>
    <property type="match status" value="1"/>
</dbReference>
<dbReference type="FunFam" id="3.40.1160.10:FF:000004">
    <property type="entry name" value="Acetylglutamate kinase"/>
    <property type="match status" value="1"/>
</dbReference>
<dbReference type="Gene3D" id="3.40.1160.10">
    <property type="entry name" value="Acetylglutamate kinase-like"/>
    <property type="match status" value="1"/>
</dbReference>
<dbReference type="HAMAP" id="MF_00082">
    <property type="entry name" value="ArgB"/>
    <property type="match status" value="1"/>
</dbReference>
<dbReference type="InterPro" id="IPR036393">
    <property type="entry name" value="AceGlu_kinase-like_sf"/>
</dbReference>
<dbReference type="InterPro" id="IPR004662">
    <property type="entry name" value="AcgluKinase_fam"/>
</dbReference>
<dbReference type="InterPro" id="IPR037528">
    <property type="entry name" value="ArgB"/>
</dbReference>
<dbReference type="InterPro" id="IPR001048">
    <property type="entry name" value="Asp/Glu/Uridylate_kinase"/>
</dbReference>
<dbReference type="InterPro" id="IPR001057">
    <property type="entry name" value="Glu/AcGlu_kinase"/>
</dbReference>
<dbReference type="InterPro" id="IPR041727">
    <property type="entry name" value="NAGK-C"/>
</dbReference>
<dbReference type="NCBIfam" id="TIGR00761">
    <property type="entry name" value="argB"/>
    <property type="match status" value="1"/>
</dbReference>
<dbReference type="PANTHER" id="PTHR23342">
    <property type="entry name" value="N-ACETYLGLUTAMATE SYNTHASE"/>
    <property type="match status" value="1"/>
</dbReference>
<dbReference type="PANTHER" id="PTHR23342:SF0">
    <property type="entry name" value="N-ACETYLGLUTAMATE SYNTHASE, MITOCHONDRIAL"/>
    <property type="match status" value="1"/>
</dbReference>
<dbReference type="Pfam" id="PF00696">
    <property type="entry name" value="AA_kinase"/>
    <property type="match status" value="1"/>
</dbReference>
<dbReference type="PIRSF" id="PIRSF000728">
    <property type="entry name" value="NAGK"/>
    <property type="match status" value="1"/>
</dbReference>
<dbReference type="PRINTS" id="PR00474">
    <property type="entry name" value="GLU5KINASE"/>
</dbReference>
<dbReference type="SUPFAM" id="SSF53633">
    <property type="entry name" value="Carbamate kinase-like"/>
    <property type="match status" value="1"/>
</dbReference>
<sequence>MMTDSAPPEPIHAEIPEGWLHKAKTLSEALPYMRRFAGLTIVIKYGGHAMGDPELAKTFARDVVLLKQVGMNPVVVHGGGPQIGRMLDTLRIQSTFIDGLRVTDAATVDVVEMVLAGSINKAIVTEINQAGGCAVGLSGKDGRLIQARKMVRKRHDPESNIERVLDLGFVGEPVVIDPHVLIQFRDSDIIPVIAPIGIGEAGETFNINADTAAGALAAQMKAARLLMLTDVKGVLDKDKQLIQELSVDRARLLKQEGTISGGMIPKVETCIDAVERGVEAAVIVDGRVPHAVLLEIFTPRGAGTLIRASR</sequence>
<protein>
    <recommendedName>
        <fullName evidence="1">Acetylglutamate kinase</fullName>
        <ecNumber evidence="1">2.7.2.8</ecNumber>
    </recommendedName>
    <alternativeName>
        <fullName evidence="1">N-acetyl-L-glutamate 5-phosphotransferase</fullName>
    </alternativeName>
    <alternativeName>
        <fullName evidence="1">NAG kinase</fullName>
        <shortName evidence="1">NAGK</shortName>
    </alternativeName>
</protein>
<keyword id="KW-0028">Amino-acid biosynthesis</keyword>
<keyword id="KW-0055">Arginine biosynthesis</keyword>
<keyword id="KW-0067">ATP-binding</keyword>
<keyword id="KW-0963">Cytoplasm</keyword>
<keyword id="KW-0418">Kinase</keyword>
<keyword id="KW-0547">Nucleotide-binding</keyword>
<keyword id="KW-1185">Reference proteome</keyword>
<keyword id="KW-0808">Transferase</keyword>
<feature type="chain" id="PRO_0000264750" description="Acetylglutamate kinase">
    <location>
        <begin position="1"/>
        <end position="310"/>
    </location>
</feature>
<feature type="binding site" evidence="1">
    <location>
        <begin position="79"/>
        <end position="80"/>
    </location>
    <ligand>
        <name>substrate</name>
    </ligand>
</feature>
<feature type="binding site" evidence="1">
    <location>
        <position position="101"/>
    </location>
    <ligand>
        <name>substrate</name>
    </ligand>
</feature>
<feature type="binding site" evidence="1">
    <location>
        <position position="206"/>
    </location>
    <ligand>
        <name>substrate</name>
    </ligand>
</feature>
<feature type="site" description="Transition state stabilizer" evidence="1">
    <location>
        <position position="44"/>
    </location>
</feature>
<feature type="site" description="Transition state stabilizer" evidence="1">
    <location>
        <position position="266"/>
    </location>
</feature>
<name>ARGB_RHORT</name>
<evidence type="ECO:0000255" key="1">
    <source>
        <dbReference type="HAMAP-Rule" id="MF_00082"/>
    </source>
</evidence>
<reference key="1">
    <citation type="journal article" date="2011" name="Stand. Genomic Sci.">
        <title>Complete genome sequence of Rhodospirillum rubrum type strain (S1).</title>
        <authorList>
            <person name="Munk A.C."/>
            <person name="Copeland A."/>
            <person name="Lucas S."/>
            <person name="Lapidus A."/>
            <person name="Del Rio T.G."/>
            <person name="Barry K."/>
            <person name="Detter J.C."/>
            <person name="Hammon N."/>
            <person name="Israni S."/>
            <person name="Pitluck S."/>
            <person name="Brettin T."/>
            <person name="Bruce D."/>
            <person name="Han C."/>
            <person name="Tapia R."/>
            <person name="Gilna P."/>
            <person name="Schmutz J."/>
            <person name="Larimer F."/>
            <person name="Land M."/>
            <person name="Kyrpides N.C."/>
            <person name="Mavromatis K."/>
            <person name="Richardson P."/>
            <person name="Rohde M."/>
            <person name="Goeker M."/>
            <person name="Klenk H.P."/>
            <person name="Zhang Y."/>
            <person name="Roberts G.P."/>
            <person name="Reslewic S."/>
            <person name="Schwartz D.C."/>
        </authorList>
    </citation>
    <scope>NUCLEOTIDE SEQUENCE [LARGE SCALE GENOMIC DNA]</scope>
    <source>
        <strain>ATCC 11170 / ATH 1.1.1 / DSM 467 / LMG 4362 / NCIMB 8255 / S1</strain>
    </source>
</reference>
<proteinExistence type="inferred from homology"/>